<proteinExistence type="inferred from homology"/>
<reference key="1">
    <citation type="submission" date="2008-04" db="EMBL/GenBank/DDBJ databases">
        <title>Complete sequence of Yersinia pseudotuberculosis PB1/+.</title>
        <authorList>
            <person name="Copeland A."/>
            <person name="Lucas S."/>
            <person name="Lapidus A."/>
            <person name="Glavina del Rio T."/>
            <person name="Dalin E."/>
            <person name="Tice H."/>
            <person name="Bruce D."/>
            <person name="Goodwin L."/>
            <person name="Pitluck S."/>
            <person name="Munk A.C."/>
            <person name="Brettin T."/>
            <person name="Detter J.C."/>
            <person name="Han C."/>
            <person name="Tapia R."/>
            <person name="Schmutz J."/>
            <person name="Larimer F."/>
            <person name="Land M."/>
            <person name="Hauser L."/>
            <person name="Challacombe J.F."/>
            <person name="Green L."/>
            <person name="Lindler L.E."/>
            <person name="Nikolich M.P."/>
            <person name="Richardson P."/>
        </authorList>
    </citation>
    <scope>NUCLEOTIDE SEQUENCE [LARGE SCALE GENOMIC DNA]</scope>
    <source>
        <strain>PB1/+</strain>
    </source>
</reference>
<protein>
    <recommendedName>
        <fullName evidence="1">S-adenosylmethionine:tRNA ribosyltransferase-isomerase</fullName>
        <ecNumber evidence="1">2.4.99.17</ecNumber>
    </recommendedName>
    <alternativeName>
        <fullName evidence="1">Queuosine biosynthesis protein QueA</fullName>
    </alternativeName>
</protein>
<name>QUEA_YERPB</name>
<feature type="chain" id="PRO_1000094833" description="S-adenosylmethionine:tRNA ribosyltransferase-isomerase">
    <location>
        <begin position="1"/>
        <end position="356"/>
    </location>
</feature>
<accession>B2K6S5</accession>
<gene>
    <name evidence="1" type="primary">queA</name>
    <name type="ordered locus">YPTS_0968</name>
</gene>
<dbReference type="EC" id="2.4.99.17" evidence="1"/>
<dbReference type="EMBL" id="CP001048">
    <property type="protein sequence ID" value="ACC87949.1"/>
    <property type="molecule type" value="Genomic_DNA"/>
</dbReference>
<dbReference type="RefSeq" id="WP_011191859.1">
    <property type="nucleotide sequence ID" value="NZ_CP009780.1"/>
</dbReference>
<dbReference type="SMR" id="B2K6S5"/>
<dbReference type="KEGG" id="ypb:YPTS_0968"/>
<dbReference type="PATRIC" id="fig|502801.10.peg.309"/>
<dbReference type="UniPathway" id="UPA00392"/>
<dbReference type="GO" id="GO:0005737">
    <property type="term" value="C:cytoplasm"/>
    <property type="evidence" value="ECO:0007669"/>
    <property type="project" value="UniProtKB-SubCell"/>
</dbReference>
<dbReference type="GO" id="GO:0051075">
    <property type="term" value="F:S-adenosylmethionine:tRNA ribosyltransferase-isomerase activity"/>
    <property type="evidence" value="ECO:0007669"/>
    <property type="project" value="UniProtKB-EC"/>
</dbReference>
<dbReference type="GO" id="GO:0008616">
    <property type="term" value="P:queuosine biosynthetic process"/>
    <property type="evidence" value="ECO:0007669"/>
    <property type="project" value="UniProtKB-UniRule"/>
</dbReference>
<dbReference type="GO" id="GO:0002099">
    <property type="term" value="P:tRNA wobble guanine modification"/>
    <property type="evidence" value="ECO:0007669"/>
    <property type="project" value="TreeGrafter"/>
</dbReference>
<dbReference type="FunFam" id="2.40.10.240:FF:000001">
    <property type="entry name" value="S-adenosylmethionine:tRNA ribosyltransferase-isomerase"/>
    <property type="match status" value="1"/>
</dbReference>
<dbReference type="FunFam" id="3.40.1780.10:FF:000001">
    <property type="entry name" value="S-adenosylmethionine:tRNA ribosyltransferase-isomerase"/>
    <property type="match status" value="1"/>
</dbReference>
<dbReference type="Gene3D" id="2.40.10.240">
    <property type="entry name" value="QueA-like"/>
    <property type="match status" value="1"/>
</dbReference>
<dbReference type="Gene3D" id="3.40.1780.10">
    <property type="entry name" value="QueA-like"/>
    <property type="match status" value="1"/>
</dbReference>
<dbReference type="HAMAP" id="MF_00113">
    <property type="entry name" value="QueA"/>
    <property type="match status" value="1"/>
</dbReference>
<dbReference type="InterPro" id="IPR003699">
    <property type="entry name" value="QueA"/>
</dbReference>
<dbReference type="InterPro" id="IPR042118">
    <property type="entry name" value="QueA_dom1"/>
</dbReference>
<dbReference type="InterPro" id="IPR042119">
    <property type="entry name" value="QueA_dom2"/>
</dbReference>
<dbReference type="InterPro" id="IPR036100">
    <property type="entry name" value="QueA_sf"/>
</dbReference>
<dbReference type="NCBIfam" id="NF001140">
    <property type="entry name" value="PRK00147.1"/>
    <property type="match status" value="1"/>
</dbReference>
<dbReference type="NCBIfam" id="TIGR00113">
    <property type="entry name" value="queA"/>
    <property type="match status" value="1"/>
</dbReference>
<dbReference type="PANTHER" id="PTHR30307">
    <property type="entry name" value="S-ADENOSYLMETHIONINE:TRNA RIBOSYLTRANSFERASE-ISOMERASE"/>
    <property type="match status" value="1"/>
</dbReference>
<dbReference type="PANTHER" id="PTHR30307:SF0">
    <property type="entry name" value="S-ADENOSYLMETHIONINE:TRNA RIBOSYLTRANSFERASE-ISOMERASE"/>
    <property type="match status" value="1"/>
</dbReference>
<dbReference type="Pfam" id="PF02547">
    <property type="entry name" value="Queuosine_synth"/>
    <property type="match status" value="1"/>
</dbReference>
<dbReference type="SUPFAM" id="SSF111337">
    <property type="entry name" value="QueA-like"/>
    <property type="match status" value="1"/>
</dbReference>
<keyword id="KW-0963">Cytoplasm</keyword>
<keyword id="KW-0671">Queuosine biosynthesis</keyword>
<keyword id="KW-0949">S-adenosyl-L-methionine</keyword>
<keyword id="KW-0808">Transferase</keyword>
<evidence type="ECO:0000255" key="1">
    <source>
        <dbReference type="HAMAP-Rule" id="MF_00113"/>
    </source>
</evidence>
<comment type="function">
    <text evidence="1">Transfers and isomerizes the ribose moiety from AdoMet to the 7-aminomethyl group of 7-deazaguanine (preQ1-tRNA) to give epoxyqueuosine (oQ-tRNA).</text>
</comment>
<comment type="catalytic activity">
    <reaction evidence="1">
        <text>7-aminomethyl-7-carbaguanosine(34) in tRNA + S-adenosyl-L-methionine = epoxyqueuosine(34) in tRNA + adenine + L-methionine + 2 H(+)</text>
        <dbReference type="Rhea" id="RHEA:32155"/>
        <dbReference type="Rhea" id="RHEA-COMP:10342"/>
        <dbReference type="Rhea" id="RHEA-COMP:18582"/>
        <dbReference type="ChEBI" id="CHEBI:15378"/>
        <dbReference type="ChEBI" id="CHEBI:16708"/>
        <dbReference type="ChEBI" id="CHEBI:57844"/>
        <dbReference type="ChEBI" id="CHEBI:59789"/>
        <dbReference type="ChEBI" id="CHEBI:82833"/>
        <dbReference type="ChEBI" id="CHEBI:194443"/>
        <dbReference type="EC" id="2.4.99.17"/>
    </reaction>
</comment>
<comment type="pathway">
    <text evidence="1">tRNA modification; tRNA-queuosine biosynthesis.</text>
</comment>
<comment type="subunit">
    <text evidence="1">Monomer.</text>
</comment>
<comment type="subcellular location">
    <subcellularLocation>
        <location evidence="1">Cytoplasm</location>
    </subcellularLocation>
</comment>
<comment type="similarity">
    <text evidence="1">Belongs to the QueA family.</text>
</comment>
<sequence>MRVADFSFELPEALIAHYPQPQRSGCRLLSLDGPTGTLTHGIFTDLLDKLAPGDLLVFNNTRVIPARLFGRKASGGKLEVLVERVLDDHRVLAHVKASKAPKPGAELLLGDDESIRATMLARHDTLFELCFDDERDVFTILNAVGHMPLPPYIDRPDEDADRELYQTVYSQRPGAVAAPTAGLHFDEPMLAALQEKGIEMAFVTLHVGAGTFQPVRVDTIEDHIMHSEYAEVPQEVVDAVLACKARGKRVVAVGTTSVRSLESAAKAAENGLIAPFFGDTRIFIYPGYHYQVVDALVTNFHLPESTLIMLVSAFAGYKNTMNAYQQAVAEQYRFFSYGDAMFISRNPRAPQEKVSP</sequence>
<organism>
    <name type="scientific">Yersinia pseudotuberculosis serotype IB (strain PB1/+)</name>
    <dbReference type="NCBI Taxonomy" id="502801"/>
    <lineage>
        <taxon>Bacteria</taxon>
        <taxon>Pseudomonadati</taxon>
        <taxon>Pseudomonadota</taxon>
        <taxon>Gammaproteobacteria</taxon>
        <taxon>Enterobacterales</taxon>
        <taxon>Yersiniaceae</taxon>
        <taxon>Yersinia</taxon>
    </lineage>
</organism>